<keyword id="KW-0963">Cytoplasm</keyword>
<keyword id="KW-1185">Reference proteome</keyword>
<keyword id="KW-0687">Ribonucleoprotein</keyword>
<keyword id="KW-0689">Ribosomal protein</keyword>
<reference key="1">
    <citation type="submission" date="2004-11" db="EMBL/GenBank/DDBJ databases">
        <authorList>
            <consortium name="The German cDNA consortium"/>
        </authorList>
    </citation>
    <scope>NUCLEOTIDE SEQUENCE [LARGE SCALE MRNA]</scope>
    <source>
        <tissue>Heart</tissue>
    </source>
</reference>
<reference key="2">
    <citation type="unpublished observations" date="2023-10">
        <authorList>
            <person name="Leibundgut M.A."/>
            <person name="Ban N."/>
        </authorList>
    </citation>
    <scope>REVISION OF SUBUNIT</scope>
    <scope>NOMENCLATURE</scope>
</reference>
<accession>Q5RFG9</accession>
<dbReference type="EMBL" id="CR857189">
    <property type="protein sequence ID" value="CAH89488.1"/>
    <property type="molecule type" value="mRNA"/>
</dbReference>
<dbReference type="RefSeq" id="NP_001124641.1">
    <property type="nucleotide sequence ID" value="NM_001131169.2"/>
</dbReference>
<dbReference type="SMR" id="Q5RFG9"/>
<dbReference type="GeneID" id="100171482"/>
<dbReference type="KEGG" id="pon:100171482"/>
<dbReference type="CTD" id="6171"/>
<dbReference type="eggNOG" id="ENOG502TM1J">
    <property type="taxonomic scope" value="Eukaryota"/>
</dbReference>
<dbReference type="HOGENOM" id="CLU_220499_1_0_1"/>
<dbReference type="InParanoid" id="Q5RFG9"/>
<dbReference type="Proteomes" id="UP000001595">
    <property type="component" value="Chromosome 12"/>
</dbReference>
<dbReference type="GO" id="GO:0005737">
    <property type="term" value="C:cytoplasm"/>
    <property type="evidence" value="ECO:0007669"/>
    <property type="project" value="UniProtKB-SubCell"/>
</dbReference>
<dbReference type="GO" id="GO:1990904">
    <property type="term" value="C:ribonucleoprotein complex"/>
    <property type="evidence" value="ECO:0007669"/>
    <property type="project" value="UniProtKB-KW"/>
</dbReference>
<dbReference type="GO" id="GO:0005840">
    <property type="term" value="C:ribosome"/>
    <property type="evidence" value="ECO:0007669"/>
    <property type="project" value="UniProtKB-KW"/>
</dbReference>
<dbReference type="GO" id="GO:0003735">
    <property type="term" value="F:structural constituent of ribosome"/>
    <property type="evidence" value="ECO:0007669"/>
    <property type="project" value="InterPro"/>
</dbReference>
<dbReference type="GO" id="GO:0006412">
    <property type="term" value="P:translation"/>
    <property type="evidence" value="ECO:0007669"/>
    <property type="project" value="InterPro"/>
</dbReference>
<dbReference type="InterPro" id="IPR007836">
    <property type="entry name" value="Ribosomal_eS32"/>
</dbReference>
<dbReference type="Pfam" id="PF05162">
    <property type="entry name" value="Ribosomal_L41"/>
    <property type="match status" value="1"/>
</dbReference>
<evidence type="ECO:0000250" key="1">
    <source>
        <dbReference type="UniProtKB" id="P62945"/>
    </source>
</evidence>
<evidence type="ECO:0000250" key="2">
    <source>
        <dbReference type="UniProtKB" id="P62947"/>
    </source>
</evidence>
<evidence type="ECO:0000256" key="3">
    <source>
        <dbReference type="SAM" id="MobiDB-lite"/>
    </source>
</evidence>
<evidence type="ECO:0000305" key="4"/>
<evidence type="ECO:0000305" key="5">
    <source ref="2"/>
</evidence>
<comment type="function">
    <text evidence="1 2 5">Component of the small ribosomal subunit (Probable) (Ref.2). The ribosome is a large ribonucleoprotein complex responsible for the synthesis of proteins in the cell (By similarity). Interacts with the beta subunit of protein kinase CKII and stimulates phosphorylation of DNA topoisomerase II alpha by CKII (By similarity).</text>
</comment>
<comment type="subunit">
    <text evidence="5">Component of the small ribosomal subunit (Ref.2).</text>
</comment>
<comment type="subcellular location">
    <subcellularLocation>
        <location evidence="2">Cytoplasm</location>
    </subcellularLocation>
</comment>
<comment type="miscellaneous">
    <text evidence="5">Initially thought to be part of the large ribosomal subunit. Crystal structures show eS32/eL41 to be a small ribosomal subunit forming a bridge at the interface of the 2 subunits.</text>
</comment>
<comment type="similarity">
    <text evidence="4">Belongs to the eukaryotic ribosomal protein eS32 family.</text>
</comment>
<gene>
    <name type="primary">RPL41</name>
</gene>
<name>RS32_PONAB</name>
<protein>
    <recommendedName>
        <fullName evidence="5">Small ribosomal subunit protein eS32</fullName>
    </recommendedName>
    <alternativeName>
        <fullName>60S ribosomal protein L41</fullName>
    </alternativeName>
    <alternativeName>
        <fullName evidence="4">Large ribosomal subunit protein eL41</fullName>
    </alternativeName>
</protein>
<organism>
    <name type="scientific">Pongo abelii</name>
    <name type="common">Sumatran orangutan</name>
    <name type="synonym">Pongo pygmaeus abelii</name>
    <dbReference type="NCBI Taxonomy" id="9601"/>
    <lineage>
        <taxon>Eukaryota</taxon>
        <taxon>Metazoa</taxon>
        <taxon>Chordata</taxon>
        <taxon>Craniata</taxon>
        <taxon>Vertebrata</taxon>
        <taxon>Euteleostomi</taxon>
        <taxon>Mammalia</taxon>
        <taxon>Eutheria</taxon>
        <taxon>Euarchontoglires</taxon>
        <taxon>Primates</taxon>
        <taxon>Haplorrhini</taxon>
        <taxon>Catarrhini</taxon>
        <taxon>Hominidae</taxon>
        <taxon>Pongo</taxon>
    </lineage>
</organism>
<feature type="chain" id="PRO_0000265736" description="Small ribosomal subunit protein eS32">
    <location>
        <begin position="1"/>
        <end position="25"/>
    </location>
</feature>
<feature type="region of interest" description="Disordered" evidence="3">
    <location>
        <begin position="1"/>
        <end position="25"/>
    </location>
</feature>
<sequence length="25" mass="3456">MRAKWRKKRMRRLKRKRRKMRQRSK</sequence>
<proteinExistence type="evidence at protein level"/>